<accession>A8LPW1</accession>
<comment type="function">
    <text evidence="1">Involved in the gluconeogenesis. Catalyzes stereospecifically the conversion of dihydroxyacetone phosphate (DHAP) to D-glyceraldehyde-3-phosphate (G3P).</text>
</comment>
<comment type="catalytic activity">
    <reaction evidence="1">
        <text>D-glyceraldehyde 3-phosphate = dihydroxyacetone phosphate</text>
        <dbReference type="Rhea" id="RHEA:18585"/>
        <dbReference type="ChEBI" id="CHEBI:57642"/>
        <dbReference type="ChEBI" id="CHEBI:59776"/>
        <dbReference type="EC" id="5.3.1.1"/>
    </reaction>
</comment>
<comment type="pathway">
    <text evidence="1">Carbohydrate biosynthesis; gluconeogenesis.</text>
</comment>
<comment type="pathway">
    <text evidence="1">Carbohydrate degradation; glycolysis; D-glyceraldehyde 3-phosphate from glycerone phosphate: step 1/1.</text>
</comment>
<comment type="subunit">
    <text evidence="1">Homodimer.</text>
</comment>
<comment type="subcellular location">
    <subcellularLocation>
        <location evidence="1">Cytoplasm</location>
    </subcellularLocation>
</comment>
<comment type="similarity">
    <text evidence="1">Belongs to the triosephosphate isomerase family.</text>
</comment>
<dbReference type="EC" id="5.3.1.1" evidence="1"/>
<dbReference type="EMBL" id="CP000830">
    <property type="protein sequence ID" value="ABV93815.1"/>
    <property type="molecule type" value="Genomic_DNA"/>
</dbReference>
<dbReference type="RefSeq" id="WP_012178748.1">
    <property type="nucleotide sequence ID" value="NC_009952.1"/>
</dbReference>
<dbReference type="SMR" id="A8LPW1"/>
<dbReference type="STRING" id="398580.Dshi_2078"/>
<dbReference type="KEGG" id="dsh:Dshi_2078"/>
<dbReference type="eggNOG" id="COG0149">
    <property type="taxonomic scope" value="Bacteria"/>
</dbReference>
<dbReference type="HOGENOM" id="CLU_024251_2_1_5"/>
<dbReference type="OrthoDB" id="9809429at2"/>
<dbReference type="UniPathway" id="UPA00109">
    <property type="reaction ID" value="UER00189"/>
</dbReference>
<dbReference type="UniPathway" id="UPA00138"/>
<dbReference type="Proteomes" id="UP000006833">
    <property type="component" value="Chromosome"/>
</dbReference>
<dbReference type="GO" id="GO:0005829">
    <property type="term" value="C:cytosol"/>
    <property type="evidence" value="ECO:0007669"/>
    <property type="project" value="TreeGrafter"/>
</dbReference>
<dbReference type="GO" id="GO:0004807">
    <property type="term" value="F:triose-phosphate isomerase activity"/>
    <property type="evidence" value="ECO:0007669"/>
    <property type="project" value="UniProtKB-UniRule"/>
</dbReference>
<dbReference type="GO" id="GO:0006094">
    <property type="term" value="P:gluconeogenesis"/>
    <property type="evidence" value="ECO:0007669"/>
    <property type="project" value="UniProtKB-UniRule"/>
</dbReference>
<dbReference type="GO" id="GO:0046166">
    <property type="term" value="P:glyceraldehyde-3-phosphate biosynthetic process"/>
    <property type="evidence" value="ECO:0007669"/>
    <property type="project" value="TreeGrafter"/>
</dbReference>
<dbReference type="GO" id="GO:0019563">
    <property type="term" value="P:glycerol catabolic process"/>
    <property type="evidence" value="ECO:0007669"/>
    <property type="project" value="TreeGrafter"/>
</dbReference>
<dbReference type="GO" id="GO:0006096">
    <property type="term" value="P:glycolytic process"/>
    <property type="evidence" value="ECO:0007669"/>
    <property type="project" value="UniProtKB-UniRule"/>
</dbReference>
<dbReference type="CDD" id="cd00311">
    <property type="entry name" value="TIM"/>
    <property type="match status" value="1"/>
</dbReference>
<dbReference type="FunFam" id="3.20.20.70:FF:000016">
    <property type="entry name" value="Triosephosphate isomerase"/>
    <property type="match status" value="1"/>
</dbReference>
<dbReference type="Gene3D" id="3.20.20.70">
    <property type="entry name" value="Aldolase class I"/>
    <property type="match status" value="1"/>
</dbReference>
<dbReference type="HAMAP" id="MF_00147_B">
    <property type="entry name" value="TIM_B"/>
    <property type="match status" value="1"/>
</dbReference>
<dbReference type="InterPro" id="IPR013785">
    <property type="entry name" value="Aldolase_TIM"/>
</dbReference>
<dbReference type="InterPro" id="IPR035990">
    <property type="entry name" value="TIM_sf"/>
</dbReference>
<dbReference type="InterPro" id="IPR022896">
    <property type="entry name" value="TrioseP_Isoase_bac/euk"/>
</dbReference>
<dbReference type="InterPro" id="IPR000652">
    <property type="entry name" value="Triosephosphate_isomerase"/>
</dbReference>
<dbReference type="InterPro" id="IPR020861">
    <property type="entry name" value="Triosephosphate_isomerase_AS"/>
</dbReference>
<dbReference type="NCBIfam" id="TIGR00419">
    <property type="entry name" value="tim"/>
    <property type="match status" value="1"/>
</dbReference>
<dbReference type="PANTHER" id="PTHR21139">
    <property type="entry name" value="TRIOSEPHOSPHATE ISOMERASE"/>
    <property type="match status" value="1"/>
</dbReference>
<dbReference type="PANTHER" id="PTHR21139:SF42">
    <property type="entry name" value="TRIOSEPHOSPHATE ISOMERASE"/>
    <property type="match status" value="1"/>
</dbReference>
<dbReference type="Pfam" id="PF00121">
    <property type="entry name" value="TIM"/>
    <property type="match status" value="1"/>
</dbReference>
<dbReference type="SUPFAM" id="SSF51351">
    <property type="entry name" value="Triosephosphate isomerase (TIM)"/>
    <property type="match status" value="1"/>
</dbReference>
<dbReference type="PROSITE" id="PS00171">
    <property type="entry name" value="TIM_1"/>
    <property type="match status" value="1"/>
</dbReference>
<dbReference type="PROSITE" id="PS51440">
    <property type="entry name" value="TIM_2"/>
    <property type="match status" value="1"/>
</dbReference>
<organism>
    <name type="scientific">Dinoroseobacter shibae (strain DSM 16493 / NCIMB 14021 / DFL 12)</name>
    <dbReference type="NCBI Taxonomy" id="398580"/>
    <lineage>
        <taxon>Bacteria</taxon>
        <taxon>Pseudomonadati</taxon>
        <taxon>Pseudomonadota</taxon>
        <taxon>Alphaproteobacteria</taxon>
        <taxon>Rhodobacterales</taxon>
        <taxon>Roseobacteraceae</taxon>
        <taxon>Dinoroseobacter</taxon>
    </lineage>
</organism>
<proteinExistence type="inferred from homology"/>
<sequence length="247" mass="25169">MRRKLAAGNWKMNGLRAALAEAEAITAAAAADGPEVLLCPPATLLAPMAAQAEGTALQIGGQYCHPAPSGAHTGHVSAPMLRDAGASYVIVGHSERRQDDGERDADVRAQTLAAWQAGLTAIVCVGETEAERDAANTLAIIGGQLAGSIPDTATGANLVVAYEPVWAIGTGRVPSVDQIGEVHDFIRARLEQRFGEGVGRSVRLLYGGSVKPGIAAEIFAVSNVDGALVGGASLKAADFTGIIAALG</sequence>
<reference key="1">
    <citation type="journal article" date="2010" name="ISME J.">
        <title>The complete genome sequence of the algal symbiont Dinoroseobacter shibae: a hitchhiker's guide to life in the sea.</title>
        <authorList>
            <person name="Wagner-Dobler I."/>
            <person name="Ballhausen B."/>
            <person name="Berger M."/>
            <person name="Brinkhoff T."/>
            <person name="Buchholz I."/>
            <person name="Bunk B."/>
            <person name="Cypionka H."/>
            <person name="Daniel R."/>
            <person name="Drepper T."/>
            <person name="Gerdts G."/>
            <person name="Hahnke S."/>
            <person name="Han C."/>
            <person name="Jahn D."/>
            <person name="Kalhoefer D."/>
            <person name="Kiss H."/>
            <person name="Klenk H.P."/>
            <person name="Kyrpides N."/>
            <person name="Liebl W."/>
            <person name="Liesegang H."/>
            <person name="Meincke L."/>
            <person name="Pati A."/>
            <person name="Petersen J."/>
            <person name="Piekarski T."/>
            <person name="Pommerenke C."/>
            <person name="Pradella S."/>
            <person name="Pukall R."/>
            <person name="Rabus R."/>
            <person name="Stackebrandt E."/>
            <person name="Thole S."/>
            <person name="Thompson L."/>
            <person name="Tielen P."/>
            <person name="Tomasch J."/>
            <person name="von Jan M."/>
            <person name="Wanphrut N."/>
            <person name="Wichels A."/>
            <person name="Zech H."/>
            <person name="Simon M."/>
        </authorList>
    </citation>
    <scope>NUCLEOTIDE SEQUENCE [LARGE SCALE GENOMIC DNA]</scope>
    <source>
        <strain>DSM 16493 / NCIMB 14021 / DFL 12</strain>
    </source>
</reference>
<gene>
    <name evidence="1" type="primary">tpiA</name>
    <name type="ordered locus">Dshi_2078</name>
</gene>
<name>TPIS_DINSH</name>
<keyword id="KW-0963">Cytoplasm</keyword>
<keyword id="KW-0312">Gluconeogenesis</keyword>
<keyword id="KW-0324">Glycolysis</keyword>
<keyword id="KW-0413">Isomerase</keyword>
<keyword id="KW-1185">Reference proteome</keyword>
<feature type="chain" id="PRO_1000076643" description="Triosephosphate isomerase">
    <location>
        <begin position="1"/>
        <end position="247"/>
    </location>
</feature>
<feature type="active site" description="Electrophile" evidence="1">
    <location>
        <position position="93"/>
    </location>
</feature>
<feature type="active site" description="Proton acceptor" evidence="1">
    <location>
        <position position="163"/>
    </location>
</feature>
<feature type="binding site" evidence="1">
    <location>
        <begin position="9"/>
        <end position="11"/>
    </location>
    <ligand>
        <name>substrate</name>
    </ligand>
</feature>
<feature type="binding site" evidence="1">
    <location>
        <position position="169"/>
    </location>
    <ligand>
        <name>substrate</name>
    </ligand>
</feature>
<feature type="binding site" evidence="1">
    <location>
        <position position="209"/>
    </location>
    <ligand>
        <name>substrate</name>
    </ligand>
</feature>
<feature type="binding site" evidence="1">
    <location>
        <begin position="230"/>
        <end position="231"/>
    </location>
    <ligand>
        <name>substrate</name>
    </ligand>
</feature>
<protein>
    <recommendedName>
        <fullName evidence="1">Triosephosphate isomerase</fullName>
        <shortName evidence="1">TIM</shortName>
        <shortName evidence="1">TPI</shortName>
        <ecNumber evidence="1">5.3.1.1</ecNumber>
    </recommendedName>
    <alternativeName>
        <fullName evidence="1">Triose-phosphate isomerase</fullName>
    </alternativeName>
</protein>
<evidence type="ECO:0000255" key="1">
    <source>
        <dbReference type="HAMAP-Rule" id="MF_00147"/>
    </source>
</evidence>